<reference key="1">
    <citation type="journal article" date="2010" name="Genome Biol. Evol.">
        <title>Continuing evolution of Burkholderia mallei through genome reduction and large-scale rearrangements.</title>
        <authorList>
            <person name="Losada L."/>
            <person name="Ronning C.M."/>
            <person name="DeShazer D."/>
            <person name="Woods D."/>
            <person name="Fedorova N."/>
            <person name="Kim H.S."/>
            <person name="Shabalina S.A."/>
            <person name="Pearson T.R."/>
            <person name="Brinkac L."/>
            <person name="Tan P."/>
            <person name="Nandi T."/>
            <person name="Crabtree J."/>
            <person name="Badger J."/>
            <person name="Beckstrom-Sternberg S."/>
            <person name="Saqib M."/>
            <person name="Schutzer S.E."/>
            <person name="Keim P."/>
            <person name="Nierman W.C."/>
        </authorList>
    </citation>
    <scope>NUCLEOTIDE SEQUENCE [LARGE SCALE GENOMIC DNA]</scope>
    <source>
        <strain>NCTC 10247</strain>
    </source>
</reference>
<name>DUT_BURM7</name>
<proteinExistence type="inferred from homology"/>
<evidence type="ECO:0000255" key="1">
    <source>
        <dbReference type="HAMAP-Rule" id="MF_00116"/>
    </source>
</evidence>
<feature type="chain" id="PRO_1000015452" description="Deoxyuridine 5'-triphosphate nucleotidohydrolase">
    <location>
        <begin position="1"/>
        <end position="148"/>
    </location>
</feature>
<feature type="binding site" evidence="1">
    <location>
        <begin position="67"/>
        <end position="69"/>
    </location>
    <ligand>
        <name>substrate</name>
    </ligand>
</feature>
<feature type="binding site" evidence="1">
    <location>
        <position position="80"/>
    </location>
    <ligand>
        <name>substrate</name>
    </ligand>
</feature>
<feature type="binding site" evidence="1">
    <location>
        <begin position="84"/>
        <end position="86"/>
    </location>
    <ligand>
        <name>substrate</name>
    </ligand>
</feature>
<feature type="binding site" evidence="1">
    <location>
        <position position="94"/>
    </location>
    <ligand>
        <name>substrate</name>
    </ligand>
</feature>
<accession>A3MN10</accession>
<keyword id="KW-0378">Hydrolase</keyword>
<keyword id="KW-0460">Magnesium</keyword>
<keyword id="KW-0479">Metal-binding</keyword>
<keyword id="KW-0546">Nucleotide metabolism</keyword>
<dbReference type="EC" id="3.6.1.23" evidence="1"/>
<dbReference type="EMBL" id="CP000548">
    <property type="protein sequence ID" value="ABO06489.1"/>
    <property type="molecule type" value="Genomic_DNA"/>
</dbReference>
<dbReference type="RefSeq" id="WP_004186718.1">
    <property type="nucleotide sequence ID" value="NZ_CP007802.1"/>
</dbReference>
<dbReference type="SMR" id="A3MN10"/>
<dbReference type="GeneID" id="93059416"/>
<dbReference type="KEGG" id="bmaz:BM44_1114"/>
<dbReference type="KEGG" id="bmn:BMA10247_2115"/>
<dbReference type="PATRIC" id="fig|320389.8.peg.1246"/>
<dbReference type="UniPathway" id="UPA00610">
    <property type="reaction ID" value="UER00666"/>
</dbReference>
<dbReference type="GO" id="GO:0004170">
    <property type="term" value="F:dUTP diphosphatase activity"/>
    <property type="evidence" value="ECO:0007669"/>
    <property type="project" value="UniProtKB-UniRule"/>
</dbReference>
<dbReference type="GO" id="GO:0000287">
    <property type="term" value="F:magnesium ion binding"/>
    <property type="evidence" value="ECO:0007669"/>
    <property type="project" value="UniProtKB-UniRule"/>
</dbReference>
<dbReference type="GO" id="GO:0006226">
    <property type="term" value="P:dUMP biosynthetic process"/>
    <property type="evidence" value="ECO:0007669"/>
    <property type="project" value="UniProtKB-UniRule"/>
</dbReference>
<dbReference type="GO" id="GO:0046081">
    <property type="term" value="P:dUTP catabolic process"/>
    <property type="evidence" value="ECO:0007669"/>
    <property type="project" value="InterPro"/>
</dbReference>
<dbReference type="CDD" id="cd07557">
    <property type="entry name" value="trimeric_dUTPase"/>
    <property type="match status" value="1"/>
</dbReference>
<dbReference type="FunFam" id="2.70.40.10:FF:000002">
    <property type="entry name" value="dUTP diphosphatase"/>
    <property type="match status" value="1"/>
</dbReference>
<dbReference type="Gene3D" id="2.70.40.10">
    <property type="match status" value="1"/>
</dbReference>
<dbReference type="HAMAP" id="MF_00116">
    <property type="entry name" value="dUTPase_bact"/>
    <property type="match status" value="1"/>
</dbReference>
<dbReference type="InterPro" id="IPR008181">
    <property type="entry name" value="dUTPase"/>
</dbReference>
<dbReference type="InterPro" id="IPR029054">
    <property type="entry name" value="dUTPase-like"/>
</dbReference>
<dbReference type="InterPro" id="IPR036157">
    <property type="entry name" value="dUTPase-like_sf"/>
</dbReference>
<dbReference type="InterPro" id="IPR033704">
    <property type="entry name" value="dUTPase_trimeric"/>
</dbReference>
<dbReference type="NCBIfam" id="TIGR00576">
    <property type="entry name" value="dut"/>
    <property type="match status" value="1"/>
</dbReference>
<dbReference type="NCBIfam" id="NF001862">
    <property type="entry name" value="PRK00601.1"/>
    <property type="match status" value="1"/>
</dbReference>
<dbReference type="PANTHER" id="PTHR11241">
    <property type="entry name" value="DEOXYURIDINE 5'-TRIPHOSPHATE NUCLEOTIDOHYDROLASE"/>
    <property type="match status" value="1"/>
</dbReference>
<dbReference type="PANTHER" id="PTHR11241:SF0">
    <property type="entry name" value="DEOXYURIDINE 5'-TRIPHOSPHATE NUCLEOTIDOHYDROLASE"/>
    <property type="match status" value="1"/>
</dbReference>
<dbReference type="Pfam" id="PF00692">
    <property type="entry name" value="dUTPase"/>
    <property type="match status" value="1"/>
</dbReference>
<dbReference type="SUPFAM" id="SSF51283">
    <property type="entry name" value="dUTPase-like"/>
    <property type="match status" value="1"/>
</dbReference>
<comment type="function">
    <text evidence="1">This enzyme is involved in nucleotide metabolism: it produces dUMP, the immediate precursor of thymidine nucleotides and it decreases the intracellular concentration of dUTP so that uracil cannot be incorporated into DNA.</text>
</comment>
<comment type="catalytic activity">
    <reaction evidence="1">
        <text>dUTP + H2O = dUMP + diphosphate + H(+)</text>
        <dbReference type="Rhea" id="RHEA:10248"/>
        <dbReference type="ChEBI" id="CHEBI:15377"/>
        <dbReference type="ChEBI" id="CHEBI:15378"/>
        <dbReference type="ChEBI" id="CHEBI:33019"/>
        <dbReference type="ChEBI" id="CHEBI:61555"/>
        <dbReference type="ChEBI" id="CHEBI:246422"/>
        <dbReference type="EC" id="3.6.1.23"/>
    </reaction>
</comment>
<comment type="cofactor">
    <cofactor evidence="1">
        <name>Mg(2+)</name>
        <dbReference type="ChEBI" id="CHEBI:18420"/>
    </cofactor>
</comment>
<comment type="pathway">
    <text evidence="1">Pyrimidine metabolism; dUMP biosynthesis; dUMP from dCTP (dUTP route): step 2/2.</text>
</comment>
<comment type="similarity">
    <text evidence="1">Belongs to the dUTPase family.</text>
</comment>
<protein>
    <recommendedName>
        <fullName evidence="1">Deoxyuridine 5'-triphosphate nucleotidohydrolase</fullName>
        <shortName evidence="1">dUTPase</shortName>
        <ecNumber evidence="1">3.6.1.23</ecNumber>
    </recommendedName>
    <alternativeName>
        <fullName evidence="1">dUTP pyrophosphatase</fullName>
    </alternativeName>
</protein>
<organism>
    <name type="scientific">Burkholderia mallei (strain NCTC 10247)</name>
    <dbReference type="NCBI Taxonomy" id="320389"/>
    <lineage>
        <taxon>Bacteria</taxon>
        <taxon>Pseudomonadati</taxon>
        <taxon>Pseudomonadota</taxon>
        <taxon>Betaproteobacteria</taxon>
        <taxon>Burkholderiales</taxon>
        <taxon>Burkholderiaceae</taxon>
        <taxon>Burkholderia</taxon>
        <taxon>pseudomallei group</taxon>
    </lineage>
</organism>
<sequence>MKLDLKILDARMRDYLPKYATTGSAGLDLRACLDAPVTLKPGDTALVPTGLAIHLADPGYAALILPRSGLGHKHGIVLGNLVGLIDSDYQGELMISTWNRGQTEFALNPFERLAQLVIVPVVQARFNLVDDFAQSERGAGGFGSTGRG</sequence>
<gene>
    <name evidence="1" type="primary">dut</name>
    <name type="ordered locus">BMA10247_2115</name>
</gene>